<dbReference type="EMBL" id="CM000126">
    <property type="protein sequence ID" value="EAY72911.1"/>
    <property type="status" value="ALT_SEQ"/>
    <property type="molecule type" value="Genomic_DNA"/>
</dbReference>
<dbReference type="EMBL" id="EF555550">
    <property type="protein sequence ID" value="ABQ57291.1"/>
    <property type="molecule type" value="mRNA"/>
</dbReference>
<dbReference type="SMR" id="A2WLR5"/>
<dbReference type="STRING" id="39946.A2WLR5"/>
<dbReference type="Proteomes" id="UP000007015">
    <property type="component" value="Chromosome 1"/>
</dbReference>
<dbReference type="GO" id="GO:0005634">
    <property type="term" value="C:nucleus"/>
    <property type="evidence" value="ECO:0007669"/>
    <property type="project" value="UniProtKB-SubCell"/>
</dbReference>
<dbReference type="GO" id="GO:0003677">
    <property type="term" value="F:DNA binding"/>
    <property type="evidence" value="ECO:0007669"/>
    <property type="project" value="UniProtKB-KW"/>
</dbReference>
<dbReference type="GO" id="GO:0003700">
    <property type="term" value="F:DNA-binding transcription factor activity"/>
    <property type="evidence" value="ECO:0007669"/>
    <property type="project" value="InterPro"/>
</dbReference>
<dbReference type="GO" id="GO:0008289">
    <property type="term" value="F:lipid binding"/>
    <property type="evidence" value="ECO:0007669"/>
    <property type="project" value="InterPro"/>
</dbReference>
<dbReference type="CDD" id="cd14686">
    <property type="entry name" value="bZIP"/>
    <property type="match status" value="1"/>
</dbReference>
<dbReference type="CDD" id="cd00086">
    <property type="entry name" value="homeodomain"/>
    <property type="match status" value="1"/>
</dbReference>
<dbReference type="CDD" id="cd08875">
    <property type="entry name" value="START_ArGLABRA2_like"/>
    <property type="match status" value="1"/>
</dbReference>
<dbReference type="Gene3D" id="3.30.530.20">
    <property type="match status" value="1"/>
</dbReference>
<dbReference type="Gene3D" id="1.10.10.60">
    <property type="entry name" value="Homeodomain-like"/>
    <property type="match status" value="1"/>
</dbReference>
<dbReference type="InterPro" id="IPR001356">
    <property type="entry name" value="HD"/>
</dbReference>
<dbReference type="InterPro" id="IPR044830">
    <property type="entry name" value="HD-Zip_III"/>
</dbReference>
<dbReference type="InterPro" id="IPR009057">
    <property type="entry name" value="Homeodomain-like_sf"/>
</dbReference>
<dbReference type="InterPro" id="IPR013978">
    <property type="entry name" value="MEKHLA"/>
</dbReference>
<dbReference type="InterPro" id="IPR023393">
    <property type="entry name" value="START-like_dom_sf"/>
</dbReference>
<dbReference type="InterPro" id="IPR002913">
    <property type="entry name" value="START_lipid-bd_dom"/>
</dbReference>
<dbReference type="PANTHER" id="PTHR45950">
    <property type="entry name" value="HOMEOBOX-LEUCINE ZIPPER PROTEIN ATHB-14"/>
    <property type="match status" value="1"/>
</dbReference>
<dbReference type="PANTHER" id="PTHR45950:SF1">
    <property type="entry name" value="HOMEOBOX-LEUCINE ZIPPER PROTEIN ATHB-15"/>
    <property type="match status" value="1"/>
</dbReference>
<dbReference type="Pfam" id="PF00046">
    <property type="entry name" value="Homeodomain"/>
    <property type="match status" value="1"/>
</dbReference>
<dbReference type="Pfam" id="PF08670">
    <property type="entry name" value="MEKHLA"/>
    <property type="match status" value="1"/>
</dbReference>
<dbReference type="Pfam" id="PF01852">
    <property type="entry name" value="START"/>
    <property type="match status" value="1"/>
</dbReference>
<dbReference type="SMART" id="SM00389">
    <property type="entry name" value="HOX"/>
    <property type="match status" value="1"/>
</dbReference>
<dbReference type="SMART" id="SM00234">
    <property type="entry name" value="START"/>
    <property type="match status" value="1"/>
</dbReference>
<dbReference type="SUPFAM" id="SSF55961">
    <property type="entry name" value="Bet v1-like"/>
    <property type="match status" value="1"/>
</dbReference>
<dbReference type="SUPFAM" id="SSF46689">
    <property type="entry name" value="Homeodomain-like"/>
    <property type="match status" value="1"/>
</dbReference>
<dbReference type="PROSITE" id="PS50071">
    <property type="entry name" value="HOMEOBOX_2"/>
    <property type="match status" value="1"/>
</dbReference>
<dbReference type="PROSITE" id="PS50848">
    <property type="entry name" value="START"/>
    <property type="match status" value="1"/>
</dbReference>
<accession>A2WLR5</accession>
<accession>A5JPW5</accession>
<evidence type="ECO:0000250" key="1"/>
<evidence type="ECO:0000255" key="2"/>
<evidence type="ECO:0000255" key="3">
    <source>
        <dbReference type="PROSITE-ProRule" id="PRU00108"/>
    </source>
</evidence>
<evidence type="ECO:0000255" key="4">
    <source>
        <dbReference type="PROSITE-ProRule" id="PRU00197"/>
    </source>
</evidence>
<evidence type="ECO:0000269" key="5">
    <source>
    </source>
</evidence>
<evidence type="ECO:0000305" key="6"/>
<keyword id="KW-0175">Coiled coil</keyword>
<keyword id="KW-0238">DNA-binding</keyword>
<keyword id="KW-0371">Homeobox</keyword>
<keyword id="KW-0539">Nucleus</keyword>
<keyword id="KW-1185">Reference proteome</keyword>
<keyword id="KW-0804">Transcription</keyword>
<keyword id="KW-0805">Transcription regulation</keyword>
<reference key="1">
    <citation type="journal article" date="2005" name="PLoS Biol.">
        <title>The genomes of Oryza sativa: a history of duplications.</title>
        <authorList>
            <person name="Yu J."/>
            <person name="Wang J."/>
            <person name="Lin W."/>
            <person name="Li S."/>
            <person name="Li H."/>
            <person name="Zhou J."/>
            <person name="Ni P."/>
            <person name="Dong W."/>
            <person name="Hu S."/>
            <person name="Zeng C."/>
            <person name="Zhang J."/>
            <person name="Zhang Y."/>
            <person name="Li R."/>
            <person name="Xu Z."/>
            <person name="Li S."/>
            <person name="Li X."/>
            <person name="Zheng H."/>
            <person name="Cong L."/>
            <person name="Lin L."/>
            <person name="Yin J."/>
            <person name="Geng J."/>
            <person name="Li G."/>
            <person name="Shi J."/>
            <person name="Liu J."/>
            <person name="Lv H."/>
            <person name="Li J."/>
            <person name="Wang J."/>
            <person name="Deng Y."/>
            <person name="Ran L."/>
            <person name="Shi X."/>
            <person name="Wang X."/>
            <person name="Wu Q."/>
            <person name="Li C."/>
            <person name="Ren X."/>
            <person name="Wang J."/>
            <person name="Wang X."/>
            <person name="Li D."/>
            <person name="Liu D."/>
            <person name="Zhang X."/>
            <person name="Ji Z."/>
            <person name="Zhao W."/>
            <person name="Sun Y."/>
            <person name="Zhang Z."/>
            <person name="Bao J."/>
            <person name="Han Y."/>
            <person name="Dong L."/>
            <person name="Ji J."/>
            <person name="Chen P."/>
            <person name="Wu S."/>
            <person name="Liu J."/>
            <person name="Xiao Y."/>
            <person name="Bu D."/>
            <person name="Tan J."/>
            <person name="Yang L."/>
            <person name="Ye C."/>
            <person name="Zhang J."/>
            <person name="Xu J."/>
            <person name="Zhou Y."/>
            <person name="Yu Y."/>
            <person name="Zhang B."/>
            <person name="Zhuang S."/>
            <person name="Wei H."/>
            <person name="Liu B."/>
            <person name="Lei M."/>
            <person name="Yu H."/>
            <person name="Li Y."/>
            <person name="Xu H."/>
            <person name="Wei S."/>
            <person name="He X."/>
            <person name="Fang L."/>
            <person name="Zhang Z."/>
            <person name="Zhang Y."/>
            <person name="Huang X."/>
            <person name="Su Z."/>
            <person name="Tong W."/>
            <person name="Li J."/>
            <person name="Tong Z."/>
            <person name="Li S."/>
            <person name="Ye J."/>
            <person name="Wang L."/>
            <person name="Fang L."/>
            <person name="Lei T."/>
            <person name="Chen C.-S."/>
            <person name="Chen H.-C."/>
            <person name="Xu Z."/>
            <person name="Li H."/>
            <person name="Huang H."/>
            <person name="Zhang F."/>
            <person name="Xu H."/>
            <person name="Li N."/>
            <person name="Zhao C."/>
            <person name="Li S."/>
            <person name="Dong L."/>
            <person name="Huang Y."/>
            <person name="Li L."/>
            <person name="Xi Y."/>
            <person name="Qi Q."/>
            <person name="Li W."/>
            <person name="Zhang B."/>
            <person name="Hu W."/>
            <person name="Zhang Y."/>
            <person name="Tian X."/>
            <person name="Jiao Y."/>
            <person name="Liang X."/>
            <person name="Jin J."/>
            <person name="Gao L."/>
            <person name="Zheng W."/>
            <person name="Hao B."/>
            <person name="Liu S.-M."/>
            <person name="Wang W."/>
            <person name="Yuan L."/>
            <person name="Cao M."/>
            <person name="McDermott J."/>
            <person name="Samudrala R."/>
            <person name="Wang J."/>
            <person name="Wong G.K.-S."/>
            <person name="Yang H."/>
        </authorList>
    </citation>
    <scope>NUCLEOTIDE SEQUENCE [LARGE SCALE GENOMIC DNA]</scope>
    <source>
        <strain>cv. 93-11</strain>
    </source>
</reference>
<reference key="2">
    <citation type="journal article" date="2008" name="Plant Mol. Biol.">
        <title>A genome-wide survey of HD-Zip genes in rice and analysis of drought-responsive family members.</title>
        <authorList>
            <person name="Agalou A."/>
            <person name="Purwantomo S."/>
            <person name="Oevernaes E."/>
            <person name="Johannesson H."/>
            <person name="Zhu X."/>
            <person name="Estiati A."/>
            <person name="de Kam R.J."/>
            <person name="Engstroem P."/>
            <person name="Slamet-Loedin I.H."/>
            <person name="Zhu Z."/>
            <person name="Wang M."/>
            <person name="Xiong L."/>
            <person name="Meijer A.H."/>
            <person name="Ouwerkerk P.B.F."/>
        </authorList>
    </citation>
    <scope>NUCLEOTIDE SEQUENCE [MRNA] OF 235-336</scope>
    <scope>TISSUE SPECIFICITY</scope>
    <scope>GENE FAMILY</scope>
    <scope>NOMENCLATURE</scope>
    <source>
        <strain>cv. Minghui 86</strain>
    </source>
</reference>
<feature type="chain" id="PRO_0000331729" description="Homeobox-leucine zipper protein HOX29">
    <location>
        <begin position="1"/>
        <end position="861"/>
    </location>
</feature>
<feature type="domain" description="START" evidence="4">
    <location>
        <begin position="162"/>
        <end position="390"/>
    </location>
</feature>
<feature type="DNA-binding region" description="Homeobox" evidence="3">
    <location>
        <begin position="2"/>
        <end position="65"/>
    </location>
</feature>
<feature type="coiled-coil region" evidence="2">
    <location>
        <begin position="57"/>
        <end position="99"/>
    </location>
</feature>
<feature type="sequence conflict" description="In Ref. 2; ABQ57291." evidence="6" ref="2">
    <original>P</original>
    <variation>L</variation>
    <location>
        <position position="277"/>
    </location>
</feature>
<feature type="sequence conflict" description="In Ref. 2; ABQ57291." evidence="6" ref="2">
    <original>G</original>
    <variation>V</variation>
    <location>
        <position position="334"/>
    </location>
</feature>
<comment type="function">
    <text evidence="1">Probable transcription factor.</text>
</comment>
<comment type="subcellular location">
    <subcellularLocation>
        <location evidence="6">Nucleus</location>
    </subcellularLocation>
</comment>
<comment type="tissue specificity">
    <text evidence="5">Expressed in roots, stems and leaf blades.</text>
</comment>
<comment type="similarity">
    <text evidence="6">Belongs to the HD-ZIP homeobox family. Class III subfamily.</text>
</comment>
<comment type="sequence caution" evidence="6">
    <conflict type="erroneous gene model prediction">
        <sequence resource="EMBL-CDS" id="EAY72911"/>
    </conflict>
</comment>
<proteinExistence type="evidence at transcript level"/>
<name>HOX29_ORYSI</name>
<sequence>MDASKYVRYTPEQVEALERLYYECPKPSSLRRQQLVRECPALANVDPKQIKVWFQNRRCREKQRKESSRLQALNRKLTAMNKLLMEENDRLQKQVSQLVYDHGRHGVAAAGMMRRVPAFPPQAAAAAGHQLATATDTSCESVVTSGHHHQQQQHNVVQPPPRDASPAGLMSIAEETLTEFLSKATGTAVEWLQMPGMKPGPDSIGIIAISHGCAGVAARACGLVGMEPAKVAEILKDRPLWLRDCRSMDVVNVLPAGANGTIELLYMQLYAPTTLAPARDFWLLRYTSILDDGSLVVCERSLSSKQGGPSMPLVQPFIRGEMLPSGFLIRPSDGGGSVIHIVDHMDLEPWSVPEVVRPLYESSAMVAQKISMAALRYLRQVAHEDTRSVITGWGRQPAALRALSQKLTRGFNEALNGLADDGWSVIESDGVDDVCISVNSSKVIGCNATFSSGLPIVSTGVLCAKASMLLQDVSPPSLLQFLREHRSQWADSNLDAFFASAMKPNFCNLPMSRLGGFSGQVILPLAHTFEPEEFLEVIKLGNASNYQDTLVHRDLFLLQMYNGVEESSAGTCSELIFAPIDASFSDDSPLLPSGFRIIPIDSPLDTSSPNCTLDLASTLEAATPRSRISGVNGGGGTCAAAAASSSSKAVMTIAFQFAFDGHLQDSVAAMARQYMRNIISSVQRIAVALSSSRLVPPGAAAAAAQLSPVTPEAATLPRWICQSYRFHFGAELIKSVDANSSNESILKAVWHHPSAILCCSLKAMPVFTFANQSGLDMLETTLVALQDMTLEKVFDDQGRKNLCTELPNIMEQGMACMEGGVCVSSVGRAASYEKAVAWKVVDGDGGGAHCISFMFINWTFL</sequence>
<gene>
    <name type="primary">HOX29</name>
    <name type="ORF">OsI_000758</name>
</gene>
<organism>
    <name type="scientific">Oryza sativa subsp. indica</name>
    <name type="common">Rice</name>
    <dbReference type="NCBI Taxonomy" id="39946"/>
    <lineage>
        <taxon>Eukaryota</taxon>
        <taxon>Viridiplantae</taxon>
        <taxon>Streptophyta</taxon>
        <taxon>Embryophyta</taxon>
        <taxon>Tracheophyta</taxon>
        <taxon>Spermatophyta</taxon>
        <taxon>Magnoliopsida</taxon>
        <taxon>Liliopsida</taxon>
        <taxon>Poales</taxon>
        <taxon>Poaceae</taxon>
        <taxon>BOP clade</taxon>
        <taxon>Oryzoideae</taxon>
        <taxon>Oryzeae</taxon>
        <taxon>Oryzinae</taxon>
        <taxon>Oryza</taxon>
        <taxon>Oryza sativa</taxon>
    </lineage>
</organism>
<protein>
    <recommendedName>
        <fullName>Homeobox-leucine zipper protein HOX29</fullName>
    </recommendedName>
    <alternativeName>
        <fullName>HD-ZIP protein HOX29</fullName>
    </alternativeName>
    <alternativeName>
        <fullName>Homeodomain transcription factor HOX29</fullName>
    </alternativeName>
    <alternativeName>
        <fullName>OsHox29</fullName>
    </alternativeName>
</protein>